<gene>
    <name evidence="16" type="primary">speB</name>
</gene>
<reference key="1">
    <citation type="journal article" date="1990" name="J. Bacteriol.">
        <title>Nucleotide sequence of the streptococcal pyrogenic exotoxin type B gene and relationship between the toxin and the streptococcal proteinase precursor.</title>
        <authorList>
            <person name="Hauser A.R."/>
            <person name="Schlievert P.M."/>
        </authorList>
    </citation>
    <scope>NUCLEOTIDE SEQUENCE [GENOMIC DNA]</scope>
    <scope>PROTEIN SEQUENCE OF 28-32 AND 146-162</scope>
    <scope>SUBCELLULAR LOCATION</scope>
    <source>
        <strain>86-858</strain>
        <strain>NY-5</strain>
    </source>
</reference>
<reference key="2">
    <citation type="journal article" date="1993" name="Microb. Pathog.">
        <title>A conserved Streptococcus pyogenes extracellular cysteine protease cleaves human fibronectin and degrades vitronectin.</title>
        <authorList>
            <person name="Kapur V."/>
            <person name="Topouzis S."/>
            <person name="Majesky M.W."/>
            <person name="Li L.L."/>
            <person name="Hamrick M.R."/>
            <person name="Hamill R.J."/>
            <person name="Patti J.M."/>
            <person name="Musser J.M."/>
        </authorList>
    </citation>
    <scope>NUCLEOTIDE SEQUENCE [GENOMIC DNA]</scope>
    <scope>FUNCTION</scope>
    <source>
        <strain>1226 / Serotype M44</strain>
        <strain>1233 / Serotype M17</strain>
        <strain>1289 / Serotype M5</strain>
        <strain>1294 / Serotype M19</strain>
        <strain>1590</strain>
        <strain>162 / Serotype M22</strain>
        <strain>165 / Serotype M</strain>
        <strain>168 / Serotype M66</strain>
        <strain>1719 / Serotype T8</strain>
        <strain>1832 / Serotype M76</strain>
        <strain>1838 / Serotype M27</strain>
        <strain>1841 / Serotype M41</strain>
        <strain>1842 / Serotype M43</strain>
        <strain>1864 / Serotype M56</strain>
        <strain>1870</strain>
        <strain>1871</strain>
        <strain>1872</strain>
        <strain>1882 / Serotype M59</strain>
        <strain>1893</strain>
        <strain>1896 / Serotype M10</strain>
        <strain>1898 / Serotype M15</strain>
        <strain>1901 / Serotype M23</strain>
        <strain>1911 / Serotype M75</strain>
        <strain>1914A</strain>
        <strain>1990 / Serotype M</strain>
        <strain>1991 / Serotype M</strain>
        <strain>2017 / Serotype M</strain>
        <strain>2018 / Serotype M</strain>
        <strain>262 / Serotype M</strain>
        <strain>282 / Serotype M12</strain>
        <strain>289 / Serotype T28</strain>
        <strain>302 / Serotype M73</strain>
        <strain>317 / Serotype M</strain>
        <strain>321 / Serotype M4</strain>
        <strain>327 / Serotype M2</strain>
        <strain>366 / Serotype M30</strain>
        <strain>427 / Serotype M31</strain>
        <strain>429 / Serotype M8</strain>
        <strain>650 / Serotype M11</strain>
        <strain>659 / Serotype M13</strain>
        <strain>660 / Serotype M14</strain>
        <strain>684 / Serotype M24</strain>
        <strain>686 / Serotype M25</strain>
        <strain>719 / Serotype M49</strain>
        <strain>758 / Serotype M75</strain>
        <strain>796 / Serotype M9</strain>
        <strain>800 / Serotype M9</strain>
        <strain>807 / Serotype M33</strain>
    </source>
</reference>
<reference key="3">
    <citation type="submission" date="1999-07" db="EMBL/GenBank/DDBJ databases">
        <title>A novel cloning method used arbitrarily primed PCR.</title>
        <authorList>
            <person name="Hong K."/>
        </authorList>
    </citation>
    <scope>NUCLEOTIDE SEQUENCE [GENOMIC DNA]</scope>
    <source>
        <strain>Sv / Serotype M23</strain>
    </source>
</reference>
<reference key="4">
    <citation type="journal article" date="1982" name="J. Protein Chem.">
        <title>Primary structure of zymogen of streptococcal proteinase.</title>
        <authorList>
            <person name="Yonaha K."/>
            <person name="Elliott S.D."/>
            <person name="Liu T.-Y."/>
        </authorList>
    </citation>
    <scope>PRELIMINARY PROTEIN SEQUENCE OF 28-86 AND 121-398</scope>
</reference>
<reference key="5">
    <citation type="journal article" date="1976" name="J. Biol. Chem.">
        <title>Primary structure of streptococcal proteinase. III. Isolation of cyanogen bromide peptides: complete covalent structure of the polypeptide chain.</title>
        <authorList>
            <person name="Tai J.Y."/>
            <person name="Kortt A.A."/>
            <person name="Liu T.-Y."/>
            <person name="Elliott S.D."/>
        </authorList>
    </citation>
    <scope>PRELIMINARY PROTEIN SEQUENCE OF 146-398</scope>
</reference>
<reference key="6">
    <citation type="journal article" date="1993" name="Proc. Natl. Acad. Sci. U.S.A.">
        <title>Cleavage of interleukin 1 beta (IL-1 beta) precursor to produce active IL-1 beta by a conserved extracellular cysteine protease from Streptococcus pyogenes.</title>
        <authorList>
            <person name="Kapur V."/>
            <person name="Majesky M.W."/>
            <person name="Li L.L."/>
            <person name="Black R.A."/>
            <person name="Musser J.M."/>
        </authorList>
    </citation>
    <scope>PROTEIN SEQUENCE OF 146-155</scope>
    <scope>FUNCTION</scope>
    <scope>CATALYTIC ACTIVITY</scope>
    <source>
        <strain>1719 / Serotype T8</strain>
    </source>
</reference>
<reference key="7">
    <citation type="journal article" date="1984" name="J. Biol. Chem.">
        <title>The mixed disulfide in the zymogen of streptococcal proteinase. Characterization and implication for its biosynthesis.</title>
        <authorList>
            <person name="Lo S.S."/>
            <person name="Fraser B.A."/>
            <person name="Liu T.-Y."/>
        </authorList>
    </citation>
    <scope>METHYLTHIOLATION AT CYS-192</scope>
</reference>
<reference key="8">
    <citation type="journal article" date="1991" name="Infect. Immun.">
        <title>Frequency of the erythrogenic toxin B and C genes (speB and speC) among clinical isolates of group A streptococci.</title>
        <authorList>
            <person name="Yu C.E."/>
            <person name="Ferretti J.J."/>
        </authorList>
    </citation>
    <scope>FUNCTION</scope>
</reference>
<reference key="9">
    <citation type="journal article" date="1996" name="Infect. Immun.">
        <title>Substitution of cysteine 192 in a highly conserved Streptococcus pyogenes extracellular cysteine protease (interleukin 1beta convertase) alters proteolytic activity and ablates zymogen processing.</title>
        <authorList>
            <person name="Musser J.M."/>
            <person name="Stockbauer K."/>
            <person name="Kapur V."/>
            <person name="Rudgers G.W."/>
        </authorList>
    </citation>
    <scope>FUNCTION</scope>
    <scope>PROTEOLYTIC CLEAVAGE</scope>
    <scope>ACTIVITY REGULATION</scope>
    <scope>ACTIVE SITE</scope>
    <scope>MUTAGENESIS OF CYS-192</scope>
    <source>
        <strain>1719 / Serotype T8</strain>
    </source>
</reference>
<reference key="10">
    <citation type="journal article" date="1999" name="Eur. J. Biochem.">
        <title>Autocatalytic processing of the streptococcal cysteine protease zymogen: processing mechanism and characterization of the autoproteolytic cleavage sites.</title>
        <authorList>
            <person name="Doran J.D."/>
            <person name="Nomizu M."/>
            <person name="Takebe S."/>
            <person name="Menard R."/>
            <person name="Griffith D."/>
            <person name="Ziomek E."/>
        </authorList>
    </citation>
    <scope>FUNCTION</scope>
    <scope>PROTEOLYTIC CLEAVAGE</scope>
    <scope>ACTIVITY REGULATION</scope>
    <source>
        <strain>B220</strain>
    </source>
</reference>
<reference key="11">
    <citation type="journal article" date="1999" name="Infect. Immun.">
        <title>Streptococcal pyrogenic exotoxin B induces apoptosis and reduces phagocytic activity in U937 cells.</title>
        <authorList>
            <person name="Kuo C.-F."/>
            <person name="Wu J.-J."/>
            <person name="Tsai P.-J."/>
            <person name="Kao F.-J."/>
            <person name="Lei H.-Y."/>
            <person name="Lin M.T."/>
            <person name="Lin Y.-S."/>
        </authorList>
    </citation>
    <scope>FUNCTION</scope>
    <source>
        <strain>NZ131 / Serotype M49,T14</strain>
    </source>
</reference>
<reference key="12">
    <citation type="journal article" date="1997" name="J. Clin. Invest.">
        <title>Inactivation of Streptococcus pyogenes extracellular cysteine protease significantly decreases mouse lethality of serotype M3 and M49 strains.</title>
        <authorList>
            <person name="Lukomski S."/>
            <person name="Sreevatsan S."/>
            <person name="Amberg C."/>
            <person name="Reichardt W."/>
            <person name="Woischnik M."/>
            <person name="Podbielski A."/>
            <person name="Musser J.M."/>
        </authorList>
    </citation>
    <scope>FUNCTION</scope>
    <scope>DISRUPTION PHENOTYPE</scope>
    <source>
        <strain>719 / Serotype M49</strain>
    </source>
</reference>
<reference key="13">
    <citation type="journal article" date="2000" name="Proc. Natl. Acad. Sci. U.S.A.">
        <title>Crystal structure of the zymogen form of the group A Streptococcus virulence factor SpeB: an integrin-binding cysteine protease.</title>
        <authorList>
            <person name="Kagawa T.F."/>
            <person name="Cooney J.C."/>
            <person name="Baker H.M."/>
            <person name="McSweeney S."/>
            <person name="Liu M."/>
            <person name="Gubba S."/>
            <person name="Musser J.M."/>
            <person name="Baker E.N."/>
        </authorList>
    </citation>
    <scope>X-RAY CRYSTALLOGRAPHY (1.6 ANGSTROMS) OF 28-398</scope>
</reference>
<reference key="14">
    <citation type="journal article" date="2001" name="J. Biol. Chem.">
        <title>Substrate specificity of the streptococcal cysteine protease.</title>
        <authorList>
            <person name="Nomizu M."/>
            <person name="Pietrzynski G."/>
            <person name="Kato T."/>
            <person name="Lachance P."/>
            <person name="Menard R."/>
            <person name="Ziomek E."/>
        </authorList>
    </citation>
    <scope>FUNCTION</scope>
    <scope>CATALYTIC ACTIVITY</scope>
    <source>
        <strain>B220</strain>
    </source>
</reference>
<reference key="15">
    <citation type="journal article" date="2000" name="Mol. Microbiol.">
        <title>Role for a secreted cysteine proteinase in the establishment of host tissue tropism by group A streptococci.</title>
        <authorList>
            <person name="Svensson M.D."/>
            <person name="Scaramuzzino D.A."/>
            <person name="Sjoebring U."/>
            <person name="Olsen A."/>
            <person name="Frank C."/>
            <person name="Bessen D.E."/>
        </authorList>
    </citation>
    <scope>DISRUPTION PHENOTYPE</scope>
    <source>
        <strain>807 / Serotype M33</strain>
    </source>
</reference>
<reference key="16">
    <citation type="journal article" date="2009" name="J. Mol. Biol.">
        <title>Structure of the mature Streptococcal cysteine protease exotoxin mSpeB in its active dimeric form.</title>
        <authorList>
            <person name="Olsen J.G."/>
            <person name="Dagil R."/>
            <person name="Niclasen L.M."/>
            <person name="Sorensen O.E."/>
            <person name="Kragelund B.B."/>
        </authorList>
    </citation>
    <scope>X-RAY CRYSTALLOGRAPHY (1.55 ANGSTROMS) OF 146-398 IN COMPLEX WITH THE SYNTHETIC INHIBITOR E64</scope>
    <scope>ACTIVE SITE</scope>
    <scope>SUBUNIT</scope>
</reference>
<reference key="17">
    <citation type="journal article" date="2012" name="J. Biol. Chem.">
        <title>Ultrahigh and high resolution structures and mutational analysis of monomeric Streptococcus pyogenes SpeB reveal a functional role for the glycine-rich C-terminal loop.</title>
        <authorList>
            <person name="Gonzalez-Paez G.E."/>
            <person name="Wolan D.W."/>
        </authorList>
    </citation>
    <scope>X-RAY CRYSTALLOGRAPHY (1.06 ANGSTROMS) OF 146-398 IN COMPLEX WITH A PEPTIDE AND THE SYNTHETIC INHIBITOR E64</scope>
    <scope>FUNCTION</scope>
    <scope>CATALYTIC ACTIVITY</scope>
    <scope>BIOPHYSICOCHEMICAL PROPERTIES</scope>
    <scope>ACTIVE SITE</scope>
    <scope>MUTAGENESIS OF GLY-378; GLY-380; GLY-381; GLY-382; GLY-384 AND GLY-385</scope>
</reference>
<reference evidence="26" key="18">
    <citation type="journal article" date="2020" name="ACS Chem. Biol.">
        <title>An irreversible inhibitor to probe the role of Streptococcus pyogenes cysteine protease SpeB in evasion of host complement defenses.</title>
        <authorList>
            <person name="Woehl J.L."/>
            <person name="Kitamura S."/>
            <person name="Dillon N."/>
            <person name="Han Z."/>
            <person name="Edgar L.J."/>
            <person name="Nizet V."/>
            <person name="Wolan D.W."/>
        </authorList>
    </citation>
    <scope>X-RAY CRYSTALLOGRAPHY (1.59 ANGSTROMS) OF 28-398 IN COMPLEX WITH 2S-ALKYNE</scope>
    <scope>ACTIVITY REGULATION</scope>
</reference>
<proteinExistence type="evidence at protein level"/>
<feature type="signal peptide" evidence="7">
    <location>
        <begin position="1"/>
        <end position="27"/>
    </location>
</feature>
<feature type="propeptide" id="PRO_0000028503" evidence="7 19 21">
    <location>
        <begin position="28"/>
        <end position="145"/>
    </location>
</feature>
<feature type="chain" id="PRO_0000028504" description="Streptopain" evidence="19 21">
    <location>
        <begin position="146"/>
        <end position="398"/>
    </location>
</feature>
<feature type="region of interest" description="C-terminal active site loop" evidence="8">
    <location>
        <begin position="368"/>
        <end position="390"/>
    </location>
</feature>
<feature type="active site" description="Nucleophile" evidence="5 8 22">
    <location>
        <position position="192"/>
    </location>
</feature>
<feature type="active site" description="Proton acceptor" evidence="5">
    <location>
        <position position="340"/>
    </location>
</feature>
<feature type="binding site" evidence="8 24">
    <location>
        <position position="162"/>
    </location>
    <ligand>
        <name>E64</name>
        <dbReference type="ChEBI" id="CHEBI:192370"/>
        <note>inhibitor; produced by Aspergillus japonicus</note>
    </ligand>
</feature>
<feature type="binding site" description="covalent" evidence="5 8 23 24">
    <location>
        <position position="192"/>
    </location>
    <ligand>
        <name>E64</name>
        <dbReference type="ChEBI" id="CHEBI:192370"/>
        <note>inhibitor; produced by Aspergillus japonicus</note>
    </ligand>
</feature>
<feature type="binding site" evidence="20 25">
    <location>
        <position position="282"/>
    </location>
    <ligand>
        <name>a protein</name>
        <dbReference type="ChEBI" id="CHEBI:16541"/>
    </ligand>
</feature>
<feature type="binding site" evidence="8 24">
    <location>
        <position position="282"/>
    </location>
    <ligand>
        <name>E64</name>
        <dbReference type="ChEBI" id="CHEBI:192370"/>
        <note>inhibitor; produced by Aspergillus japonicus</note>
    </ligand>
</feature>
<feature type="binding site" evidence="20 25">
    <location>
        <position position="339"/>
    </location>
    <ligand>
        <name>a protein</name>
        <dbReference type="ChEBI" id="CHEBI:16541"/>
    </ligand>
</feature>
<feature type="binding site" evidence="8 24">
    <location>
        <position position="340"/>
    </location>
    <ligand>
        <name>E64</name>
        <dbReference type="ChEBI" id="CHEBI:192370"/>
        <note>inhibitor; produced by Aspergillus japonicus</note>
    </ligand>
</feature>
<feature type="site" description="Cleavage; by autolysis" evidence="2">
    <location>
        <begin position="53"/>
        <end position="54"/>
    </location>
</feature>
<feature type="site" description="Cleavage; by autolysis" evidence="2">
    <location>
        <begin position="68"/>
        <end position="69"/>
    </location>
</feature>
<feature type="site" description="Cleavage; by autolysis" evidence="2">
    <location>
        <begin position="129"/>
        <end position="130"/>
    </location>
</feature>
<feature type="site" description="Cleavage; by autolysis" evidence="2">
    <location>
        <begin position="139"/>
        <end position="140"/>
    </location>
</feature>
<feature type="site" description="Cleavage; by autolysis" evidence="2">
    <location>
        <begin position="145"/>
        <end position="146"/>
    </location>
</feature>
<feature type="modified residue" description="Cysteine methyl disulfide; in zymogen form" evidence="10">
    <location>
        <position position="192"/>
    </location>
</feature>
<feature type="sequence variant" description="In strain: MGAS 1896.">
    <original>G</original>
    <variation>S</variation>
    <location>
        <position position="17"/>
    </location>
</feature>
<feature type="sequence variant" description="In strain: MGAS 168.">
    <original>V</original>
    <variation>I</variation>
    <location>
        <position position="80"/>
    </location>
</feature>
<feature type="sequence variant" description="In strain: MGAS 165, 168, 429, 659, 660, 796, 800, 1719, 1838, 1882, 2017 and 2018.">
    <original>A</original>
    <variation>V</variation>
    <location>
        <position position="111"/>
    </location>
</feature>
<feature type="sequence variant" description="In strain: MGAS 650.">
    <original>T</original>
    <variation>I</variation>
    <location>
        <position position="137"/>
    </location>
</feature>
<feature type="sequence variant" description="In strain: MGAS 684.">
    <original>D</original>
    <variation>N</variation>
    <location>
        <position position="154"/>
    </location>
</feature>
<feature type="sequence variant" description="In strain: MGAS 366, 427, 758, 1294, 1911, 1914A and 1991.">
    <original>L</original>
    <variation>V</variation>
    <location>
        <position position="211"/>
    </location>
</feature>
<feature type="sequence variant" description="In strain: MGAS 1901 and Sv.">
    <original>I</original>
    <variation>V</variation>
    <location>
        <position position="305"/>
    </location>
</feature>
<feature type="sequence variant" description="In strain: MGAS 429, 659, 807, 1226, 1719, 1832, 1842, 1871, 1872, 2017 and 2018.">
    <original>S</original>
    <variation>G</variation>
    <location>
        <position position="308"/>
    </location>
</feature>
<feature type="sequence variant" description="In strain: MGAS 165, 168, 289, 302, 1233 and 1898.">
    <original>A</original>
    <variation>S</variation>
    <location>
        <position position="317"/>
    </location>
</feature>
<feature type="sequence variant" description="In strain: MGAS 1871.">
    <original>G</original>
    <variation>D</variation>
    <location>
        <position position="384"/>
    </location>
</feature>
<feature type="sequence variant" description="In strain: MGAS 366 and 1294.">
    <original>V</original>
    <variation>I</variation>
    <location>
        <position position="394"/>
    </location>
</feature>
<feature type="mutagenesis site" description="Abolished cysteine protease activity and ability to undergo autocatalytic cleavage." evidence="13">
    <original>C</original>
    <variation>S</variation>
    <location>
        <position position="192"/>
    </location>
</feature>
<feature type="mutagenesis site" description="Inhibition of the catalytic turnover, leading to a slightly decreased catalytic efficiency." evidence="8">
    <original>G</original>
    <variation>A</variation>
    <location>
        <position position="378"/>
    </location>
</feature>
<feature type="mutagenesis site" description="Reduced catalytic efficiency due to impaired priduct release." evidence="8">
    <original>G</original>
    <variation>A</variation>
    <location>
        <position position="380"/>
    </location>
</feature>
<feature type="mutagenesis site" description="No effect on catalytic efficiency or substrate-binding. Decreased ability to mediate autocatalytic cleavage." evidence="8">
    <original>G</original>
    <variation>A</variation>
    <location>
        <position position="381"/>
    </location>
</feature>
<feature type="mutagenesis site" description="No effect on catalytic efficiency or substrate-binding. Decreased ability to mediate autocatalytic cleavage." evidence="8">
    <original>G</original>
    <variation>A</variation>
    <location>
        <position position="382"/>
    </location>
</feature>
<feature type="mutagenesis site" description="Increased catalytic efficiency due to improved substrate-binding." evidence="8">
    <original>G</original>
    <variation>A</variation>
    <location>
        <position position="384"/>
    </location>
</feature>
<feature type="mutagenesis site" description="Does not affect substrate-binding." evidence="8">
    <original>G</original>
    <variation>A</variation>
    <location>
        <position position="385"/>
    </location>
</feature>
<feature type="sequence conflict" description="In Ref. 4; AA sequence." evidence="18" ref="4">
    <original>ST</original>
    <variation>AS</variation>
    <location>
        <begin position="84"/>
        <end position="85"/>
    </location>
</feature>
<feature type="sequence conflict" description="In Ref. 4; AA sequence." evidence="18" ref="4">
    <original>L</original>
    <variation>I</variation>
    <location>
        <position position="169"/>
    </location>
</feature>
<feature type="sequence conflict" description="In Ref. 4; AA sequence and 5; AA sequence." evidence="18" ref="4 5">
    <original>HAATG</original>
    <variation>AATGH</variation>
    <location>
        <begin position="187"/>
        <end position="191"/>
    </location>
</feature>
<feature type="sequence conflict" description="In Ref. 4; AA sequence and 5; AA sequence." evidence="18" ref="4 5">
    <original>N</original>
    <variation>D</variation>
    <location>
        <position position="208"/>
    </location>
</feature>
<feature type="sequence conflict" description="In Ref. 4; AA sequence and 5; AA sequence." evidence="18" ref="4 5">
    <original>D</original>
    <variation>N</variation>
    <location>
        <position position="213"/>
    </location>
</feature>
<feature type="sequence conflict" description="In Ref. 4; AA sequence and 5; AA sequence." evidence="18" ref="4 5">
    <original>NP</original>
    <variation>PD</variation>
    <location>
        <begin position="222"/>
        <end position="223"/>
    </location>
</feature>
<feature type="sequence conflict" description="In Ref. 4; AA sequence and 5; AA sequence." evidence="18" ref="4 5">
    <original>N</original>
    <variation>D</variation>
    <location>
        <position position="226"/>
    </location>
</feature>
<feature type="sequence conflict" description="In Ref. 4; AA sequence and 5; AA sequence." evidence="18" ref="4 5">
    <original>N</original>
    <variation>D</variation>
    <location>
        <position position="241"/>
    </location>
</feature>
<feature type="sequence conflict" description="In Ref. 4; AA sequence and 5; AA sequence." evidence="18" ref="4 5">
    <original>ESNVQ</original>
    <variation>QSQNV</variation>
    <location>
        <begin position="253"/>
        <end position="257"/>
    </location>
</feature>
<feature type="sequence conflict" description="In Ref. 4; AA sequence." evidence="18" ref="4">
    <original>N</original>
    <variation>D</variation>
    <location>
        <position position="306"/>
    </location>
</feature>
<feature type="sequence conflict" description="In Ref. 4; AA sequence and 5; AA sequence." evidence="18" ref="4 5">
    <original>Q</original>
    <variation>E</variation>
    <location>
        <position position="332"/>
    </location>
</feature>
<feature type="sequence conflict" description="In Ref. 4; AA sequence and 5; AA sequence." evidence="18" ref="4 5">
    <original>GAD</original>
    <variation>DGA</variation>
    <location>
        <begin position="346"/>
        <end position="348"/>
    </location>
</feature>
<feature type="sequence conflict" description="In Ref. 4; AA sequence and 5; AA sequence." evidence="18" ref="4 5">
    <original>N</original>
    <variation>D</variation>
    <location>
        <position position="356"/>
    </location>
</feature>
<feature type="sequence conflict" description="In Ref. 4; AA sequence and 5; AA sequence." evidence="18" ref="4 5">
    <original>Q</original>
    <variation>E</variation>
    <location>
        <position position="390"/>
    </location>
</feature>
<feature type="helix" evidence="27">
    <location>
        <begin position="35"/>
        <end position="38"/>
    </location>
</feature>
<feature type="helix" evidence="27">
    <location>
        <begin position="40"/>
        <end position="47"/>
    </location>
</feature>
<feature type="strand" evidence="28">
    <location>
        <begin position="64"/>
        <end position="66"/>
    </location>
</feature>
<feature type="turn" evidence="28">
    <location>
        <begin position="71"/>
        <end position="73"/>
    </location>
</feature>
<feature type="strand" evidence="27">
    <location>
        <begin position="75"/>
        <end position="82"/>
    </location>
</feature>
<feature type="strand" evidence="27">
    <location>
        <begin position="84"/>
        <end position="86"/>
    </location>
</feature>
<feature type="strand" evidence="27">
    <location>
        <begin position="88"/>
        <end position="93"/>
    </location>
</feature>
<feature type="strand" evidence="27">
    <location>
        <begin position="99"/>
        <end position="107"/>
    </location>
</feature>
<feature type="helix" evidence="27">
    <location>
        <begin position="115"/>
        <end position="130"/>
    </location>
</feature>
<feature type="helix" evidence="27">
    <location>
        <begin position="131"/>
        <end position="133"/>
    </location>
</feature>
<feature type="helix" evidence="29">
    <location>
        <begin position="152"/>
        <end position="155"/>
    </location>
</feature>
<feature type="turn" evidence="29">
    <location>
        <begin position="164"/>
        <end position="169"/>
    </location>
</feature>
<feature type="helix" evidence="29">
    <location>
        <begin position="192"/>
        <end position="204"/>
    </location>
</feature>
<feature type="strand" evidence="29">
    <location>
        <begin position="214"/>
        <end position="217"/>
    </location>
</feature>
<feature type="strand" evidence="29">
    <location>
        <begin position="230"/>
        <end position="233"/>
    </location>
</feature>
<feature type="helix" evidence="29">
    <location>
        <begin position="235"/>
        <end position="237"/>
    </location>
</feature>
<feature type="turn" evidence="29">
    <location>
        <begin position="242"/>
        <end position="244"/>
    </location>
</feature>
<feature type="helix" evidence="29">
    <location>
        <begin position="255"/>
        <end position="271"/>
    </location>
</feature>
<feature type="strand" evidence="29">
    <location>
        <begin position="277"/>
        <end position="279"/>
    </location>
</feature>
<feature type="helix" evidence="29">
    <location>
        <begin position="285"/>
        <end position="294"/>
    </location>
</feature>
<feature type="strand" evidence="29">
    <location>
        <begin position="303"/>
        <end position="306"/>
    </location>
</feature>
<feature type="helix" evidence="29">
    <location>
        <begin position="307"/>
        <end position="309"/>
    </location>
</feature>
<feature type="helix" evidence="29">
    <location>
        <begin position="312"/>
        <end position="324"/>
    </location>
</feature>
<feature type="strand" evidence="29">
    <location>
        <begin position="329"/>
        <end position="335"/>
    </location>
</feature>
<feature type="strand" evidence="29">
    <location>
        <begin position="338"/>
        <end position="351"/>
    </location>
</feature>
<feature type="strand" evidence="29">
    <location>
        <begin position="353"/>
        <end position="356"/>
    </location>
</feature>
<feature type="turn" evidence="29">
    <location>
        <begin position="360"/>
        <end position="363"/>
    </location>
</feature>
<feature type="strand" evidence="29">
    <location>
        <begin position="365"/>
        <end position="368"/>
    </location>
</feature>
<feature type="helix" evidence="29">
    <location>
        <begin position="375"/>
        <end position="377"/>
    </location>
</feature>
<feature type="strand" evidence="30">
    <location>
        <begin position="379"/>
        <end position="381"/>
    </location>
</feature>
<feature type="strand" evidence="29">
    <location>
        <begin position="388"/>
        <end position="394"/>
    </location>
</feature>
<dbReference type="EC" id="3.4.22.10" evidence="2 4 8 12"/>
<dbReference type="EMBL" id="M86905">
    <property type="protein sequence ID" value="AAA26978.1"/>
    <property type="molecule type" value="Genomic_DNA"/>
</dbReference>
<dbReference type="EMBL" id="L26126">
    <property type="protein sequence ID" value="AAA26992.1"/>
    <property type="molecule type" value="Genomic_DNA"/>
</dbReference>
<dbReference type="EMBL" id="L26127">
    <property type="protein sequence ID" value="AAA26993.1"/>
    <property type="molecule type" value="Genomic_DNA"/>
</dbReference>
<dbReference type="EMBL" id="L26128">
    <property type="protein sequence ID" value="AAA26994.1"/>
    <property type="molecule type" value="Genomic_DNA"/>
</dbReference>
<dbReference type="EMBL" id="L26129">
    <property type="protein sequence ID" value="AAA26995.1"/>
    <property type="molecule type" value="Genomic_DNA"/>
</dbReference>
<dbReference type="EMBL" id="L26130">
    <property type="protein sequence ID" value="AAA26996.1"/>
    <property type="molecule type" value="Genomic_DNA"/>
</dbReference>
<dbReference type="EMBL" id="L26131">
    <property type="protein sequence ID" value="AAA26997.1"/>
    <property type="molecule type" value="Genomic_DNA"/>
</dbReference>
<dbReference type="EMBL" id="L26132">
    <property type="protein sequence ID" value="AAA26998.1"/>
    <property type="molecule type" value="Genomic_DNA"/>
</dbReference>
<dbReference type="EMBL" id="L26133">
    <property type="protein sequence ID" value="AAA26999.1"/>
    <property type="molecule type" value="Genomic_DNA"/>
</dbReference>
<dbReference type="EMBL" id="L26135">
    <property type="protein sequence ID" value="AAA27001.1"/>
    <property type="molecule type" value="Genomic_DNA"/>
</dbReference>
<dbReference type="EMBL" id="L26136">
    <property type="protein sequence ID" value="AAA27002.1"/>
    <property type="molecule type" value="Genomic_DNA"/>
</dbReference>
<dbReference type="EMBL" id="L26137">
    <property type="protein sequence ID" value="AAA27003.1"/>
    <property type="molecule type" value="Genomic_DNA"/>
</dbReference>
<dbReference type="EMBL" id="L26138">
    <property type="protein sequence ID" value="AAA27004.1"/>
    <property type="molecule type" value="Genomic_DNA"/>
</dbReference>
<dbReference type="EMBL" id="L26139">
    <property type="protein sequence ID" value="AAA27005.1"/>
    <property type="molecule type" value="Genomic_DNA"/>
</dbReference>
<dbReference type="EMBL" id="L26140">
    <property type="protein sequence ID" value="AAA27006.1"/>
    <property type="molecule type" value="Genomic_DNA"/>
</dbReference>
<dbReference type="EMBL" id="L26141">
    <property type="protein sequence ID" value="AAA27007.1"/>
    <property type="molecule type" value="Genomic_DNA"/>
</dbReference>
<dbReference type="EMBL" id="L26142">
    <property type="protein sequence ID" value="AAA27008.1"/>
    <property type="molecule type" value="Genomic_DNA"/>
</dbReference>
<dbReference type="EMBL" id="L26143">
    <property type="protein sequence ID" value="AAA27009.1"/>
    <property type="molecule type" value="Genomic_DNA"/>
</dbReference>
<dbReference type="EMBL" id="L26144">
    <property type="protein sequence ID" value="AAA27010.1"/>
    <property type="molecule type" value="Genomic_DNA"/>
</dbReference>
<dbReference type="EMBL" id="L26145">
    <property type="protein sequence ID" value="AAA27011.1"/>
    <property type="molecule type" value="Genomic_DNA"/>
</dbReference>
<dbReference type="EMBL" id="L26147">
    <property type="protein sequence ID" value="AAA27013.1"/>
    <property type="molecule type" value="Genomic_DNA"/>
</dbReference>
<dbReference type="EMBL" id="L26148">
    <property type="protein sequence ID" value="AAA27014.1"/>
    <property type="molecule type" value="Genomic_DNA"/>
</dbReference>
<dbReference type="EMBL" id="L26149">
    <property type="protein sequence ID" value="AAA27015.1"/>
    <property type="molecule type" value="Genomic_DNA"/>
</dbReference>
<dbReference type="EMBL" id="L26150">
    <property type="protein sequence ID" value="AAA27016.1"/>
    <property type="molecule type" value="Genomic_DNA"/>
</dbReference>
<dbReference type="EMBL" id="L26151">
    <property type="protein sequence ID" value="AAA26980.1"/>
    <property type="molecule type" value="Genomic_DNA"/>
</dbReference>
<dbReference type="EMBL" id="L26152">
    <property type="protein sequence ID" value="AAA26981.1"/>
    <property type="molecule type" value="Genomic_DNA"/>
</dbReference>
<dbReference type="EMBL" id="L26153">
    <property type="protein sequence ID" value="AAA26982.1"/>
    <property type="molecule type" value="Genomic_DNA"/>
</dbReference>
<dbReference type="EMBL" id="L26154">
    <property type="protein sequence ID" value="AAA26983.1"/>
    <property type="molecule type" value="Genomic_DNA"/>
</dbReference>
<dbReference type="EMBL" id="L26155">
    <property type="protein sequence ID" value="AAA26984.1"/>
    <property type="molecule type" value="Genomic_DNA"/>
</dbReference>
<dbReference type="EMBL" id="L26156">
    <property type="protein sequence ID" value="AAA26985.1"/>
    <property type="molecule type" value="Genomic_DNA"/>
</dbReference>
<dbReference type="EMBL" id="L26157">
    <property type="protein sequence ID" value="AAA26986.1"/>
    <property type="molecule type" value="Genomic_DNA"/>
</dbReference>
<dbReference type="EMBL" id="L26159">
    <property type="protein sequence ID" value="AAA26988.1"/>
    <property type="molecule type" value="Genomic_DNA"/>
</dbReference>
<dbReference type="EMBL" id="L26160">
    <property type="protein sequence ID" value="AAA26989.1"/>
    <property type="molecule type" value="Genomic_DNA"/>
</dbReference>
<dbReference type="EMBL" id="L26161">
    <property type="protein sequence ID" value="AAA26990.1"/>
    <property type="molecule type" value="Genomic_DNA"/>
</dbReference>
<dbReference type="EMBL" id="L26162">
    <property type="protein sequence ID" value="AAA26991.1"/>
    <property type="molecule type" value="Genomic_DNA"/>
</dbReference>
<dbReference type="EMBL" id="AB030578">
    <property type="protein sequence ID" value="BAB16027.1"/>
    <property type="molecule type" value="Genomic_DNA"/>
</dbReference>
<dbReference type="PIR" id="A37768">
    <property type="entry name" value="A37768"/>
</dbReference>
<dbReference type="RefSeq" id="WP_002982421.1">
    <property type="nucleotide sequence ID" value="NZ_UHHE01000001.1"/>
</dbReference>
<dbReference type="RefSeq" id="WP_002991253.1">
    <property type="nucleotide sequence ID" value="NZ_WXZH01000036.1"/>
</dbReference>
<dbReference type="RefSeq" id="WP_009881074.1">
    <property type="nucleotide sequence ID" value="NZ_WVHC01000003.1"/>
</dbReference>
<dbReference type="RefSeq" id="WP_011285235.1">
    <property type="nucleotide sequence ID" value="NZ_WUCG01000003.1"/>
</dbReference>
<dbReference type="RefSeq" id="WP_014407896.1">
    <property type="nucleotide sequence ID" value="NZ_WXZK01000022.1"/>
</dbReference>
<dbReference type="RefSeq" id="WP_021733538.1">
    <property type="nucleotide sequence ID" value="NZ_QFXT01000046.1"/>
</dbReference>
<dbReference type="RefSeq" id="WP_023611203.1">
    <property type="nucleotide sequence ID" value="NZ_WVFH01000004.1"/>
</dbReference>
<dbReference type="RefSeq" id="WP_031488619.1">
    <property type="nucleotide sequence ID" value="NZ_WVFK01000003.1"/>
</dbReference>
<dbReference type="RefSeq" id="WP_038433740.1">
    <property type="nucleotide sequence ID" value="NZ_LS483353.1"/>
</dbReference>
<dbReference type="RefSeq" id="WP_076639504.1">
    <property type="nucleotide sequence ID" value="NZ_WXZI01000010.1"/>
</dbReference>
<dbReference type="PDB" id="1DKI">
    <property type="method" value="X-ray"/>
    <property type="resolution" value="1.60 A"/>
    <property type="chains" value="A/B/C/D=28-398"/>
</dbReference>
<dbReference type="PDB" id="1PVJ">
    <property type="method" value="X-ray"/>
    <property type="resolution" value="3.00 A"/>
    <property type="chains" value="A/B/C/D=31-398"/>
</dbReference>
<dbReference type="PDB" id="2UZJ">
    <property type="method" value="X-ray"/>
    <property type="resolution" value="1.55 A"/>
    <property type="chains" value="A/B=146-398"/>
</dbReference>
<dbReference type="PDB" id="4D8B">
    <property type="method" value="X-ray"/>
    <property type="resolution" value="1.06 A"/>
    <property type="chains" value="A=146-398"/>
</dbReference>
<dbReference type="PDB" id="4D8E">
    <property type="method" value="X-ray"/>
    <property type="resolution" value="1.50 A"/>
    <property type="chains" value="A=146-398"/>
</dbReference>
<dbReference type="PDB" id="4D8I">
    <property type="method" value="X-ray"/>
    <property type="resolution" value="1.38 A"/>
    <property type="chains" value="A=146-398"/>
</dbReference>
<dbReference type="PDB" id="6UKD">
    <property type="method" value="X-ray"/>
    <property type="resolution" value="1.59 A"/>
    <property type="chains" value="A=28-398"/>
</dbReference>
<dbReference type="PDB" id="6UQD">
    <property type="method" value="X-ray"/>
    <property type="resolution" value="2.02 A"/>
    <property type="chains" value="A/B=28-398"/>
</dbReference>
<dbReference type="PDBsum" id="1DKI"/>
<dbReference type="PDBsum" id="1PVJ"/>
<dbReference type="PDBsum" id="2UZJ"/>
<dbReference type="PDBsum" id="4D8B"/>
<dbReference type="PDBsum" id="4D8E"/>
<dbReference type="PDBsum" id="4D8I"/>
<dbReference type="PDBsum" id="6UKD"/>
<dbReference type="PDBsum" id="6UQD"/>
<dbReference type="BMRB" id="P0C0J0"/>
<dbReference type="SMR" id="P0C0J0"/>
<dbReference type="STRING" id="1314.SD89_09045"/>
<dbReference type="BindingDB" id="P0C0J0"/>
<dbReference type="ChEMBL" id="CHEMBL2034806"/>
<dbReference type="DrugBank" id="DB02766">
    <property type="generic name" value="(3R)-3-{[(Benzyloxy)carbonyl]amino}-2-oxo-4-phenylbutane-1-diazonium"/>
</dbReference>
<dbReference type="GeneID" id="69901512"/>
<dbReference type="eggNOG" id="ENOG5031HIX">
    <property type="taxonomic scope" value="Bacteria"/>
</dbReference>
<dbReference type="OMA" id="WESQIDK"/>
<dbReference type="BRENDA" id="3.4.22.10">
    <property type="organism ID" value="5935"/>
</dbReference>
<dbReference type="SABIO-RK" id="P0C0J0"/>
<dbReference type="EvolutionaryTrace" id="P0C0J0"/>
<dbReference type="PHI-base" id="PHI:5437"/>
<dbReference type="PHI-base" id="PHI:7040"/>
<dbReference type="GO" id="GO:0005576">
    <property type="term" value="C:extracellular region"/>
    <property type="evidence" value="ECO:0007669"/>
    <property type="project" value="UniProtKB-SubCell"/>
</dbReference>
<dbReference type="GO" id="GO:0044164">
    <property type="term" value="C:host cell cytosol"/>
    <property type="evidence" value="ECO:0000250"/>
    <property type="project" value="UniProtKB"/>
</dbReference>
<dbReference type="GO" id="GO:0043655">
    <property type="term" value="C:host extracellular space"/>
    <property type="evidence" value="ECO:0000250"/>
    <property type="project" value="UniProtKB"/>
</dbReference>
<dbReference type="GO" id="GO:0004197">
    <property type="term" value="F:cysteine-type endopeptidase activity"/>
    <property type="evidence" value="ECO:0000314"/>
    <property type="project" value="UniProtKB"/>
</dbReference>
<dbReference type="GO" id="GO:0008234">
    <property type="term" value="F:cysteine-type peptidase activity"/>
    <property type="evidence" value="ECO:0000314"/>
    <property type="project" value="UniProtKB"/>
</dbReference>
<dbReference type="GO" id="GO:0090729">
    <property type="term" value="F:toxin activity"/>
    <property type="evidence" value="ECO:0000314"/>
    <property type="project" value="UniProtKB"/>
</dbReference>
<dbReference type="GO" id="GO:0006508">
    <property type="term" value="P:proteolysis"/>
    <property type="evidence" value="ECO:0007669"/>
    <property type="project" value="UniProtKB-KW"/>
</dbReference>
<dbReference type="GO" id="GO:0035893">
    <property type="term" value="P:suppression of platelet aggregation in another organism"/>
    <property type="evidence" value="ECO:0000269"/>
    <property type="project" value="SigSci"/>
</dbReference>
<dbReference type="GO" id="GO:0034050">
    <property type="term" value="P:symbiont-induced defense-related programmed cell death"/>
    <property type="evidence" value="ECO:0000250"/>
    <property type="project" value="UniProtKB"/>
</dbReference>
<dbReference type="GO" id="GO:0042783">
    <property type="term" value="P:symbiont-mediated evasion of host immune response"/>
    <property type="evidence" value="ECO:0000250"/>
    <property type="project" value="UniProtKB"/>
</dbReference>
<dbReference type="GO" id="GO:0140321">
    <property type="term" value="P:symbiont-mediated suppression of host autophagy"/>
    <property type="evidence" value="ECO:0000250"/>
    <property type="project" value="UniProtKB"/>
</dbReference>
<dbReference type="Gene3D" id="3.90.70.50">
    <property type="entry name" value="Peptidase C10, streptopain"/>
    <property type="match status" value="1"/>
</dbReference>
<dbReference type="InterPro" id="IPR038765">
    <property type="entry name" value="Papain-like_cys_pep_sf"/>
</dbReference>
<dbReference type="InterPro" id="IPR000200">
    <property type="entry name" value="Peptidase_C10"/>
</dbReference>
<dbReference type="InterPro" id="IPR025896">
    <property type="entry name" value="Spi_Prtas-inh"/>
</dbReference>
<dbReference type="InterPro" id="IPR044934">
    <property type="entry name" value="Streptopain_sf"/>
</dbReference>
<dbReference type="Pfam" id="PF13734">
    <property type="entry name" value="Inhibitor_I69"/>
    <property type="match status" value="1"/>
</dbReference>
<dbReference type="Pfam" id="PF01640">
    <property type="entry name" value="Peptidase_C10"/>
    <property type="match status" value="1"/>
</dbReference>
<dbReference type="PRINTS" id="PR00797">
    <property type="entry name" value="STREPTOPAIN"/>
</dbReference>
<dbReference type="SUPFAM" id="SSF54001">
    <property type="entry name" value="Cysteine proteinases"/>
    <property type="match status" value="1"/>
</dbReference>
<name>SPEB_STRPY</name>
<organism>
    <name type="scientific">Streptococcus pyogenes</name>
    <dbReference type="NCBI Taxonomy" id="1314"/>
    <lineage>
        <taxon>Bacteria</taxon>
        <taxon>Bacillati</taxon>
        <taxon>Bacillota</taxon>
        <taxon>Bacilli</taxon>
        <taxon>Lactobacillales</taxon>
        <taxon>Streptococcaceae</taxon>
        <taxon>Streptococcus</taxon>
    </lineage>
</organism>
<accession>P0C0J0</accession>
<accession>P00788</accession>
<accession>P26296</accession>
<accession>P68883</accession>
<accession>Q54960</accession>
<accession>Q54961</accession>
<accession>Q54962</accession>
<accession>Q54963</accession>
<accession>Q54964</accession>
<accession>Q54965</accession>
<accession>Q54966</accession>
<accession>Q54967</accession>
<accession>Q54968</accession>
<accession>Q57024</accession>
<accession>Q57082</accession>
<accession>Q57202</accession>
<accession>Q57211</accession>
<accession>Q57212</accession>
<accession>Q9S680</accession>
<protein>
    <recommendedName>
        <fullName evidence="18">Streptopain</fullName>
        <ecNumber evidence="2 4 8 12">3.4.22.10</ecNumber>
    </recommendedName>
    <alternativeName>
        <fullName evidence="17">Exotoxin type B</fullName>
    </alternativeName>
    <alternativeName>
        <fullName>Group A streptococcal cysteine protease</fullName>
        <shortName>Streptococcal cysteine proteinase</shortName>
    </alternativeName>
    <alternativeName>
        <fullName evidence="16">SPE B</fullName>
    </alternativeName>
    <alternativeName>
        <fullName>Streptococcus peptidase A</fullName>
        <shortName>SPP</shortName>
    </alternativeName>
</protein>
<sequence length="398" mass="43174">MNKKKLGIRLLSLLALGGFVLANPVFADQNFARNEKEAKDSAITFIQKSAAIKAGARSAEDIKLDKVNLGGELSGSNMYVYNISTGGFVIVSGDKRSPEILGYSTSGSFDANGKENIASFMESYVEQIKENKKLDTTYAGTAEIKQPVVKSLLDSKGIHYNQGNPYNLLTPVIEKVKPGEQSFVGQHAATGCVATATAQIMKYHNYPNKGLKDYTYTLSSNNPYFNHPKNLFAAISTRQYNWNNILPTYSGRESNVQKMAISELMADVGISVDMDYGPSSGSAGSSRVQRALKENFGYNQSVHQINRSDFSKQDWEAQIDKELSQNQPVYYQGVGKVGGHAFVIDGADGRNFYHVNWGWGGVSDGFFRLDALNPSALGTGGGAGGFNGYQSAVVGIKP</sequence>
<evidence type="ECO:0000250" key="1">
    <source>
        <dbReference type="UniProtKB" id="P0C0J1"/>
    </source>
</evidence>
<evidence type="ECO:0000269" key="2">
    <source>
    </source>
</evidence>
<evidence type="ECO:0000269" key="3">
    <source>
    </source>
</evidence>
<evidence type="ECO:0000269" key="4">
    <source>
    </source>
</evidence>
<evidence type="ECO:0000269" key="5">
    <source>
    </source>
</evidence>
<evidence type="ECO:0000269" key="6">
    <source>
    </source>
</evidence>
<evidence type="ECO:0000269" key="7">
    <source>
    </source>
</evidence>
<evidence type="ECO:0000269" key="8">
    <source>
    </source>
</evidence>
<evidence type="ECO:0000269" key="9">
    <source>
    </source>
</evidence>
<evidence type="ECO:0000269" key="10">
    <source>
    </source>
</evidence>
<evidence type="ECO:0000269" key="11">
    <source>
    </source>
</evidence>
<evidence type="ECO:0000269" key="12">
    <source>
    </source>
</evidence>
<evidence type="ECO:0000269" key="13">
    <source>
    </source>
</evidence>
<evidence type="ECO:0000269" key="14">
    <source>
    </source>
</evidence>
<evidence type="ECO:0000269" key="15">
    <source>
    </source>
</evidence>
<evidence type="ECO:0000303" key="16">
    <source>
    </source>
</evidence>
<evidence type="ECO:0000303" key="17">
    <source>
    </source>
</evidence>
<evidence type="ECO:0000305" key="18"/>
<evidence type="ECO:0000305" key="19">
    <source>
    </source>
</evidence>
<evidence type="ECO:0000305" key="20">
    <source>
    </source>
</evidence>
<evidence type="ECO:0000305" key="21">
    <source>
    </source>
</evidence>
<evidence type="ECO:0000305" key="22">
    <source>
    </source>
</evidence>
<evidence type="ECO:0007744" key="23">
    <source>
        <dbReference type="PDB" id="2UZJ"/>
    </source>
</evidence>
<evidence type="ECO:0007744" key="24">
    <source>
        <dbReference type="PDB" id="4D8E"/>
    </source>
</evidence>
<evidence type="ECO:0007744" key="25">
    <source>
        <dbReference type="PDB" id="4D8I"/>
    </source>
</evidence>
<evidence type="ECO:0007744" key="26">
    <source>
        <dbReference type="PDB" id="6UKD"/>
    </source>
</evidence>
<evidence type="ECO:0007829" key="27">
    <source>
        <dbReference type="PDB" id="1DKI"/>
    </source>
</evidence>
<evidence type="ECO:0007829" key="28">
    <source>
        <dbReference type="PDB" id="1PVJ"/>
    </source>
</evidence>
<evidence type="ECO:0007829" key="29">
    <source>
        <dbReference type="PDB" id="2UZJ"/>
    </source>
</evidence>
<evidence type="ECO:0007829" key="30">
    <source>
        <dbReference type="PDB" id="6UKD"/>
    </source>
</evidence>
<comment type="function">
    <text evidence="1 2 4 6 8 11 12 13 14 15">Cysteine protease that acts as a key streptococcal virulence factor by cleaving host proteins involved in immune response (PubMed:10429198, PubMed:11553627, PubMed:1987034, PubMed:22645124, PubMed:8675287, PubMed:9169486, PubMed:9864206). Triggers inflammation by mediating cleavage of host proteins, which can both promote host pathogenesis by triggering sterile inflammation and/or restrict streptococcal infection, depending on host immune statue and infection site (By similarity). Cleaves host gasdermin-A (GSDMA) in epithelial cells, promoting GSDMA activation and formation of gasdermin pores, triggering pyroptosis (By similarity). Pyroptosis triggers the elimination of the infected skin cell, depriving the pathogen of its protective niche, while inducing an inflammatory response (By similarity). This ultimately prevents bacterial penetration of the epithelial barrier and a subsequent systemic dissemination of the pathogen (By similarity). Also mediates cleavage of the cytokine precursor interleukin-1 beta (IL1B) to its mature form, resulting in inflammation and septic shock (PubMed:7689226). SpeB-mediated maturation of IL1B plays a dual role depending on infection site: while IL1B inflammatory response prevents bacterial growth during invasive skin infections, it promotes streptococcal infection of the nasopharynx by disrupting colonization resistance mediated by the microbiota (By similarity). Inhibits host autophagy be catalyzing cleavage and inactivation of key autophagy factors, such as CALCOCO2, NBR1 and SQSTM1 (By similarity). Cleaves and inhibits a number of complement factors, such as C2, C3-beta chain of C3, C4, C5 or SERPING1, thereby promoting evasion of host immunity (By similarity). May also impair adaptive immunity by catalyzing cleavage and degradation of host immunoglobulins to promote immune system evasion; the relevance of this activity is however unsure in vivo (By similarity). Catalyzes maturation and release of the peptide hormone bradykinin from the precursor Kininogen-1 (KNG1) to produce hypotension during septic shock (By similarity). Also involved in bacterial translocation across the host epithelial barrier by mediating cleavage and degradation of host epithelial junction proteins, such as CDH1 and OCLN (By similarity). Additionally, has been involved in degradation of fibronectin and vitronectin, two host extracellular matrix proteins involved in tissue integrity (PubMed:7516997). Also able to catalyze cleavage and degradation of streptococcal proteins, such as C5a peptidase, EndoS or SmeZ (By similarity). Degradation of streptococcal proteins is however strictly regulated to preserve integrity of other virulence factors (By similarity).</text>
</comment>
<comment type="catalytic activity">
    <reaction evidence="2 4 8 12">
        <text>Preferential cleavage with hydrophobic residues at P2, P1 and P1'.</text>
        <dbReference type="EC" id="3.4.22.10"/>
    </reaction>
</comment>
<comment type="activity regulation">
    <text evidence="1 2 9 13">Synthesized as an inactive zymogen to protect the intracellular components of the bacteria from proteolytic activity during protein production (PubMed:8675287). Once secreted into the extracellular milieu, cleaved into the active protease: maturation can be mediated in cis by autocatalytic cleavage, or in trans by mature SpeB, host trypsin (PRSS1) or host subtilisin (PubMed:10429198). Protease activity is strongly inhibited by zinc and copper, which prevent its maturation into an active protease: inhibition by metal ions may be required to prevent proteolysis of streptococcal proteins (By similarity). Specifically inhibited by 2S-alkyne, a nitrile-based specific covalent inhibitor (PubMed:32662975).</text>
</comment>
<comment type="biophysicochemical properties">
    <kinetics>
        <KM evidence="8">246.6 uM for a substrate peptide</KM>
        <text evidence="8">kcat is 0.69 sec(-1) for a peptide.</text>
    </kinetics>
</comment>
<comment type="subunit">
    <text evidence="8">Monomer.</text>
</comment>
<comment type="subcellular location">
    <subcellularLocation>
        <location evidence="7">Secreted</location>
    </subcellularLocation>
    <subcellularLocation>
        <location evidence="1">Host extracellular space</location>
    </subcellularLocation>
    <subcellularLocation>
        <location evidence="1">Host cytoplasm</location>
    </subcellularLocation>
</comment>
<comment type="domain">
    <text evidence="8">The C-terminal active site loop is required for the recognition and recruitment of substrates and release of hydrolyzed products.</text>
</comment>
<comment type="PTM">
    <text evidence="1 2 13">The mature protease is derived from the precursor sequence by cleavage, either in cis via an autocatalytic mechanism, or in trans by mature SpeB, host trypsin or host subtilisin (PubMed:10429198, PubMed:8675287). Maturation can involve a number of protein cleavage intermediates (PubMed:10429198). Mature SpeB probably plays the most important role in protein maturation in physiological conditions (By similarity).</text>
</comment>
<comment type="PTM">
    <text evidence="10">Methylthiolation at Cys-192 of the inactive zymogen form is probably involved in the mechanism of secretion of the proteinase into the culture fluid.</text>
</comment>
<comment type="disruption phenotype">
    <text evidence="3 14">Cells lacking SpeB display a strongly decreased virulence (PubMed:11069651, PubMed:9169486). Cells lacking SpeB are unable to infect skin tissues in a humanized mouse model for impetigo (PubMed:11069651).</text>
</comment>
<comment type="similarity">
    <text evidence="18">Belongs to the peptidase C10 family.</text>
</comment>
<comment type="caution">
    <text evidence="5 8">Was initially thought to form a homodimer (PubMed:19712682). However, it was later shown to act as a monomer (PubMed:22645124).</text>
</comment>
<keyword id="KW-0002">3D-structure</keyword>
<keyword id="KW-0068">Autocatalytic cleavage</keyword>
<keyword id="KW-0903">Direct protein sequencing</keyword>
<keyword id="KW-1035">Host cytoplasm</keyword>
<keyword id="KW-0378">Hydrolase</keyword>
<keyword id="KW-0488">Methylation</keyword>
<keyword id="KW-0645">Protease</keyword>
<keyword id="KW-0964">Secreted</keyword>
<keyword id="KW-0732">Signal</keyword>
<keyword id="KW-0788">Thiol protease</keyword>
<keyword id="KW-0800">Toxin</keyword>
<keyword id="KW-0843">Virulence</keyword>
<keyword id="KW-0865">Zymogen</keyword>